<reference key="1">
    <citation type="journal article" date="2003" name="Plant Physiol.">
        <title>The ATP-binding cassette transporters: structure, function, and gene family comparison between rice and Arabidopsis.</title>
        <authorList>
            <person name="Jasinski M."/>
            <person name="Ducos E."/>
            <person name="Martinoia E."/>
            <person name="Boutry M."/>
        </authorList>
    </citation>
    <scope>NUCLEOTIDE SEQUENCE [GENOMIC DNA]</scope>
    <source>
        <strain>cv. Nipponbare</strain>
    </source>
</reference>
<reference key="2">
    <citation type="journal article" date="2002" name="Nature">
        <title>The genome sequence and structure of rice chromosome 1.</title>
        <authorList>
            <person name="Sasaki T."/>
            <person name="Matsumoto T."/>
            <person name="Yamamoto K."/>
            <person name="Sakata K."/>
            <person name="Baba T."/>
            <person name="Katayose Y."/>
            <person name="Wu J."/>
            <person name="Niimura Y."/>
            <person name="Cheng Z."/>
            <person name="Nagamura Y."/>
            <person name="Antonio B.A."/>
            <person name="Kanamori H."/>
            <person name="Hosokawa S."/>
            <person name="Masukawa M."/>
            <person name="Arikawa K."/>
            <person name="Chiden Y."/>
            <person name="Hayashi M."/>
            <person name="Okamoto M."/>
            <person name="Ando T."/>
            <person name="Aoki H."/>
            <person name="Arita K."/>
            <person name="Hamada M."/>
            <person name="Harada C."/>
            <person name="Hijishita S."/>
            <person name="Honda M."/>
            <person name="Ichikawa Y."/>
            <person name="Idonuma A."/>
            <person name="Iijima M."/>
            <person name="Ikeda M."/>
            <person name="Ikeno M."/>
            <person name="Ito S."/>
            <person name="Ito T."/>
            <person name="Ito Y."/>
            <person name="Ito Y."/>
            <person name="Iwabuchi A."/>
            <person name="Kamiya K."/>
            <person name="Karasawa W."/>
            <person name="Katagiri S."/>
            <person name="Kikuta A."/>
            <person name="Kobayashi N."/>
            <person name="Kono I."/>
            <person name="Machita K."/>
            <person name="Maehara T."/>
            <person name="Mizuno H."/>
            <person name="Mizubayashi T."/>
            <person name="Mukai Y."/>
            <person name="Nagasaki H."/>
            <person name="Nakashima M."/>
            <person name="Nakama Y."/>
            <person name="Nakamichi Y."/>
            <person name="Nakamura M."/>
            <person name="Namiki N."/>
            <person name="Negishi M."/>
            <person name="Ohta I."/>
            <person name="Ono N."/>
            <person name="Saji S."/>
            <person name="Sakai K."/>
            <person name="Shibata M."/>
            <person name="Shimokawa T."/>
            <person name="Shomura A."/>
            <person name="Song J."/>
            <person name="Takazaki Y."/>
            <person name="Terasawa K."/>
            <person name="Tsuji K."/>
            <person name="Waki K."/>
            <person name="Yamagata H."/>
            <person name="Yamane H."/>
            <person name="Yoshiki S."/>
            <person name="Yoshihara R."/>
            <person name="Yukawa K."/>
            <person name="Zhong H."/>
            <person name="Iwama H."/>
            <person name="Endo T."/>
            <person name="Ito H."/>
            <person name="Hahn J.H."/>
            <person name="Kim H.-I."/>
            <person name="Eun M.-Y."/>
            <person name="Yano M."/>
            <person name="Jiang J."/>
            <person name="Gojobori T."/>
        </authorList>
    </citation>
    <scope>NUCLEOTIDE SEQUENCE [LARGE SCALE GENOMIC DNA]</scope>
    <source>
        <strain>cv. Nipponbare</strain>
    </source>
</reference>
<reference key="3">
    <citation type="journal article" date="2005" name="Nature">
        <title>The map-based sequence of the rice genome.</title>
        <authorList>
            <consortium name="International rice genome sequencing project (IRGSP)"/>
        </authorList>
    </citation>
    <scope>NUCLEOTIDE SEQUENCE [LARGE SCALE GENOMIC DNA]</scope>
    <source>
        <strain>cv. Nipponbare</strain>
    </source>
</reference>
<reference key="4">
    <citation type="journal article" date="2008" name="Nucleic Acids Res.">
        <title>The rice annotation project database (RAP-DB): 2008 update.</title>
        <authorList>
            <consortium name="The rice annotation project (RAP)"/>
        </authorList>
    </citation>
    <scope>GENOME REANNOTATION</scope>
    <source>
        <strain>cv. Nipponbare</strain>
    </source>
</reference>
<reference key="5">
    <citation type="journal article" date="2013" name="Rice">
        <title>Improvement of the Oryza sativa Nipponbare reference genome using next generation sequence and optical map data.</title>
        <authorList>
            <person name="Kawahara Y."/>
            <person name="de la Bastide M."/>
            <person name="Hamilton J.P."/>
            <person name="Kanamori H."/>
            <person name="McCombie W.R."/>
            <person name="Ouyang S."/>
            <person name="Schwartz D.C."/>
            <person name="Tanaka T."/>
            <person name="Wu J."/>
            <person name="Zhou S."/>
            <person name="Childs K.L."/>
            <person name="Davidson R.M."/>
            <person name="Lin H."/>
            <person name="Quesada-Ocampo L."/>
            <person name="Vaillancourt B."/>
            <person name="Sakai H."/>
            <person name="Lee S.S."/>
            <person name="Kim J."/>
            <person name="Numa H."/>
            <person name="Itoh T."/>
            <person name="Buell C.R."/>
            <person name="Matsumoto T."/>
        </authorList>
    </citation>
    <scope>GENOME REANNOTATION</scope>
    <source>
        <strain>cv. Nipponbare</strain>
    </source>
</reference>
<reference key="6">
    <citation type="journal article" date="2002" name="Planta">
        <title>The plant PDR family of ABC transporters.</title>
        <authorList>
            <person name="van den Brule S."/>
            <person name="Smart C.C."/>
        </authorList>
    </citation>
    <scope>IDENTIFICATION</scope>
</reference>
<reference key="7">
    <citation type="journal article" date="2006" name="FEBS Lett.">
        <title>Organization and function of the plant pleiotropic drug resistance ABC transporter family.</title>
        <authorList>
            <person name="Crouzet J."/>
            <person name="Trombik T."/>
            <person name="Fraysse A.S."/>
            <person name="Boutry M."/>
        </authorList>
    </citation>
    <scope>GENE FAMILY</scope>
    <scope>NOMENCLATURE</scope>
</reference>
<reference key="8">
    <citation type="journal article" date="2008" name="Trends Plant Sci.">
        <title>Plant ABC proteins - a unified nomenclature and updated inventory.</title>
        <authorList>
            <person name="Verrier P.J."/>
            <person name="Bird D."/>
            <person name="Burla B."/>
            <person name="Dassa E."/>
            <person name="Forestier C."/>
            <person name="Geisler M."/>
            <person name="Klein M."/>
            <person name="Kolukisaoglu H.U."/>
            <person name="Lee Y."/>
            <person name="Martinoia E."/>
            <person name="Murphy A."/>
            <person name="Rea P.A."/>
            <person name="Samuels L."/>
            <person name="Schulz B."/>
            <person name="Spalding E.J."/>
            <person name="Yazaki K."/>
            <person name="Theodoulou F.L."/>
        </authorList>
    </citation>
    <scope>GENE FAMILY</scope>
    <scope>NOMENCLATURE</scope>
</reference>
<gene>
    <name evidence="8" type="primary">ABCG34</name>
    <name evidence="5" type="synonym">PDR1</name>
    <name evidence="6 7" type="synonym">PDR10</name>
    <name evidence="11" type="ordered locus">Os01g0609000</name>
    <name type="ordered locus">LOC_Os01g42350</name>
    <name evidence="10" type="ORF">P0410E03.4</name>
</gene>
<name>AB34G_ORYSJ</name>
<comment type="function">
    <text evidence="1">May be a general defense protein.</text>
</comment>
<comment type="subcellular location">
    <subcellularLocation>
        <location evidence="2">Membrane</location>
        <topology evidence="2">Multi-pass membrane protein</topology>
    </subcellularLocation>
</comment>
<comment type="similarity">
    <text evidence="9">Belongs to the ABC transporter superfamily. ABCG family. PDR (TC 3.A.1.205) subfamily.</text>
</comment>
<comment type="sequence caution" evidence="9">
    <conflict type="erroneous gene model prediction">
        <sequence resource="EMBL-CDS" id="BAH91190"/>
    </conflict>
</comment>
<comment type="sequence caution" evidence="9">
    <conflict type="erroneous gene model prediction">
        <sequence resource="EMBL-CDS" id="CAD59567"/>
    </conflict>
</comment>
<proteinExistence type="inferred from homology"/>
<protein>
    <recommendedName>
        <fullName evidence="8">ABC transporter G family member 34</fullName>
        <shortName evidence="8">OsABCG34</shortName>
    </recommendedName>
    <alternativeName>
        <fullName evidence="6 7">Pleiotropic drug resistance protein 10</fullName>
        <shortName evidence="7">OsPDR10</shortName>
    </alternativeName>
</protein>
<evidence type="ECO:0000250" key="1"/>
<evidence type="ECO:0000255" key="2"/>
<evidence type="ECO:0000255" key="3">
    <source>
        <dbReference type="PROSITE-ProRule" id="PRU00434"/>
    </source>
</evidence>
<evidence type="ECO:0000256" key="4">
    <source>
        <dbReference type="SAM" id="MobiDB-lite"/>
    </source>
</evidence>
<evidence type="ECO:0000303" key="5">
    <source>
    </source>
</evidence>
<evidence type="ECO:0000303" key="6">
    <source>
    </source>
</evidence>
<evidence type="ECO:0000303" key="7">
    <source>
    </source>
</evidence>
<evidence type="ECO:0000303" key="8">
    <source>
    </source>
</evidence>
<evidence type="ECO:0000305" key="9"/>
<evidence type="ECO:0000312" key="10">
    <source>
        <dbReference type="EMBL" id="AP002844"/>
    </source>
</evidence>
<evidence type="ECO:0000312" key="11">
    <source>
        <dbReference type="EMBL" id="BAH91190.1"/>
    </source>
</evidence>
<organism>
    <name type="scientific">Oryza sativa subsp. japonica</name>
    <name type="common">Rice</name>
    <dbReference type="NCBI Taxonomy" id="39947"/>
    <lineage>
        <taxon>Eukaryota</taxon>
        <taxon>Viridiplantae</taxon>
        <taxon>Streptophyta</taxon>
        <taxon>Embryophyta</taxon>
        <taxon>Tracheophyta</taxon>
        <taxon>Spermatophyta</taxon>
        <taxon>Magnoliopsida</taxon>
        <taxon>Liliopsida</taxon>
        <taxon>Poales</taxon>
        <taxon>Poaceae</taxon>
        <taxon>BOP clade</taxon>
        <taxon>Oryzoideae</taxon>
        <taxon>Oryzeae</taxon>
        <taxon>Oryzinae</taxon>
        <taxon>Oryza</taxon>
        <taxon>Oryza sativa</taxon>
    </lineage>
</organism>
<sequence>MSSAGVVEMQKAASFRREGGGSMASMWLSADGNGAFSRSSSSSSRRMRGEEDDEEALRWAALQKLPTYDRVRAAILPMVEGEGGEAGGGGGGRRVVVDVHSLGPHERRALLERLVRVADDDNERFLLKLKERISRVGIDMPTIEVRFEHLEVEAEVRVGNSGIPTVLNSITNKIEEAANALGILPTRKQTLRILHDISGIIKPKRMTLLLGPPGSGKTTFLLALAGRLKDLKFSGQVTYNGHQMEDFVPQRTAAYISQHDLHIGEMTVRETLSFSARCQGVGSRFDMLTELTRREKAANIKPDADVDAFMKASAMEGQESNLITDYILKILGLEICADTMVGDDMVRGISGGQRKRVTTGEMLVGPANAFFMDEISTGLDSSTTFQIVKSLRQTIHILGGTAVISLLQPAPETYDLFDDIILLSDGHIVYQGPRENVLEFFELMGFKCPERKGVADFLQEVTSRKDQKQYWAQHDKPYRYVPIKEFASAFQSFHTGRSIANELATPFDKSKSHPAALTTSRYGVSAMELLKANIDRELLLIKRNSFVYIFRTIQLMTVSAMAMTVFFRTKMHRDSVADGVIFMGALFFAVMMIMLNGLSELPLTIFKLPVFFKQRDLLFFPAWTYTIPSWILKSPMSFIEVGGFCFMSYYVIGFDPNVGRFFKQYLLMLAVSQMAAALFRFVGGAARNLIVANVFGSFMLLIFMVLGGFILARDKVNKWWIWGYWISPMMYAQNAVSVNEFLGHSWDKVLNNSLSNETLGVQALMSRGIFPEAKWYWIGFGALLGFIMLFNILFTLALTYLKPDGKSQPSISEEELKEKQANINGNVLDVDTMASSNNLAIVGSTGTGSEIADNSQPTQRGMVLPFTPLSLTFEDIKYSVDMPQEMKAHGIVEDRLELLKGVSGCFRPGVLTALMGVSGAGKTTLMDVLAGRKTGGYIEGNISISGYPKKQETFARVSGYCEQNDIHSPQVTVSESLLFSAWLRLPKDVDSNTRKMFIEEVMELVELKPLRDALVGLPGVNGLSIEQRKRLTIAVELVANPSIIFMDEPTSGLDARAAAIVMRTVRNTVNTGRTVVCTIHQPSIDIFEAFDELFLMKRGGEEIYVGPLGHHSSELIKYFEGIQGVSKITDGYNPATWMLEVTTVSQEQALDVDFCDIYRKSELFQRNKALIQELSTPPPGSSELYFPTQYSQSFLIQCLACLWKQHLSYWRNPPYNAIRLFFTTVIALIFGTIFWDLGGKMGQSQDLFNAMGSMYAAVLFIGVLNGQSVQPVVSVERTVFYRERAAGMYSALPYAFGQVAIEFPYTLVQSVIYSIIVYSMIGFQWTVAKFFWYLFFMFFTLLYFTFYGMMAVGLTPSYHVASIVSSAFYAIWNLFTGFVISRPATPVWWRWYCWICPVAWTLYGLIVSQYGDIVTPMDDGIPVNVFVENYFDFKHSWLGFVAVVIVAFTMLFAFLFGFAIMKLNFQKR</sequence>
<feature type="chain" id="PRO_0000234643" description="ABC transporter G family member 34">
    <location>
        <begin position="1"/>
        <end position="1468"/>
    </location>
</feature>
<feature type="transmembrane region" description="Helical" evidence="2">
    <location>
        <begin position="546"/>
        <end position="566"/>
    </location>
</feature>
<feature type="transmembrane region" description="Helical" evidence="2">
    <location>
        <begin position="575"/>
        <end position="595"/>
    </location>
</feature>
<feature type="transmembrane region" description="Helical" evidence="2">
    <location>
        <begin position="634"/>
        <end position="654"/>
    </location>
</feature>
<feature type="transmembrane region" description="Helical" evidence="2">
    <location>
        <begin position="666"/>
        <end position="686"/>
    </location>
</feature>
<feature type="transmembrane region" description="Helical" evidence="2">
    <location>
        <begin position="690"/>
        <end position="710"/>
    </location>
</feature>
<feature type="transmembrane region" description="Helical" evidence="2">
    <location>
        <begin position="778"/>
        <end position="798"/>
    </location>
</feature>
<feature type="transmembrane region" description="Helical" evidence="2">
    <location>
        <begin position="1217"/>
        <end position="1237"/>
    </location>
</feature>
<feature type="transmembrane region" description="Helical" evidence="2">
    <location>
        <begin position="1247"/>
        <end position="1267"/>
    </location>
</feature>
<feature type="transmembrane region" description="Helical" evidence="2">
    <location>
        <begin position="1303"/>
        <end position="1323"/>
    </location>
</feature>
<feature type="transmembrane region" description="Helical" evidence="2">
    <location>
        <begin position="1330"/>
        <end position="1350"/>
    </location>
</feature>
<feature type="transmembrane region" description="Helical" evidence="2">
    <location>
        <begin position="1360"/>
        <end position="1380"/>
    </location>
</feature>
<feature type="transmembrane region" description="Helical" evidence="2">
    <location>
        <begin position="1387"/>
        <end position="1407"/>
    </location>
</feature>
<feature type="transmembrane region" description="Helical" evidence="2">
    <location>
        <begin position="1440"/>
        <end position="1460"/>
    </location>
</feature>
<feature type="domain" description="ABC transporter 1" evidence="3">
    <location>
        <begin position="178"/>
        <end position="450"/>
    </location>
</feature>
<feature type="domain" description="ABC transmembrane type-2 1">
    <location>
        <begin position="528"/>
        <end position="741"/>
    </location>
</feature>
<feature type="domain" description="ABC transporter 2" evidence="3">
    <location>
        <begin position="871"/>
        <end position="1123"/>
    </location>
</feature>
<feature type="domain" description="ABC transmembrane type-2 2">
    <location>
        <begin position="1196"/>
        <end position="1410"/>
    </location>
</feature>
<feature type="region of interest" description="Disordered" evidence="4">
    <location>
        <begin position="33"/>
        <end position="53"/>
    </location>
</feature>
<feature type="binding site" evidence="3">
    <location>
        <begin position="211"/>
        <end position="218"/>
    </location>
    <ligand>
        <name>ATP</name>
        <dbReference type="ChEBI" id="CHEBI:30616"/>
        <label>1</label>
    </ligand>
</feature>
<feature type="binding site" evidence="3">
    <location>
        <begin position="916"/>
        <end position="923"/>
    </location>
    <ligand>
        <name>ATP</name>
        <dbReference type="ChEBI" id="CHEBI:30616"/>
        <label>2</label>
    </ligand>
</feature>
<dbReference type="EMBL" id="AJ535045">
    <property type="protein sequence ID" value="CAD59567.1"/>
    <property type="status" value="ALT_SEQ"/>
    <property type="molecule type" value="Genomic_DNA"/>
</dbReference>
<dbReference type="EMBL" id="AP002844">
    <property type="status" value="NOT_ANNOTATED_CDS"/>
    <property type="molecule type" value="Genomic_DNA"/>
</dbReference>
<dbReference type="EMBL" id="AP008207">
    <property type="protein sequence ID" value="BAH91190.1"/>
    <property type="status" value="ALT_SEQ"/>
    <property type="molecule type" value="Genomic_DNA"/>
</dbReference>
<dbReference type="EMBL" id="AP014957">
    <property type="protein sequence ID" value="BAS73099.1"/>
    <property type="molecule type" value="Genomic_DNA"/>
</dbReference>
<dbReference type="EMBL" id="BK001015">
    <property type="protein sequence ID" value="DAA00884.1"/>
    <property type="molecule type" value="Genomic_DNA"/>
</dbReference>
<dbReference type="SMR" id="Q7PC80"/>
<dbReference type="FunCoup" id="Q7PC80">
    <property type="interactions" value="77"/>
</dbReference>
<dbReference type="STRING" id="39947.Q7PC80"/>
<dbReference type="PaxDb" id="39947-Q7PC80"/>
<dbReference type="EnsemblPlants" id="Os01t0609000-00">
    <property type="protein sequence ID" value="Os01t0609000-00"/>
    <property type="gene ID" value="Os01g0609000"/>
</dbReference>
<dbReference type="Gramene" id="Os01t0609000-00">
    <property type="protein sequence ID" value="Os01t0609000-00"/>
    <property type="gene ID" value="Os01g0609000"/>
</dbReference>
<dbReference type="KEGG" id="dosa:Os01g0609066"/>
<dbReference type="eggNOG" id="KOG0065">
    <property type="taxonomic scope" value="Eukaryota"/>
</dbReference>
<dbReference type="HOGENOM" id="CLU_000604_35_6_1"/>
<dbReference type="InParanoid" id="Q7PC80"/>
<dbReference type="OMA" id="PYCFLAT"/>
<dbReference type="OrthoDB" id="66620at2759"/>
<dbReference type="Proteomes" id="UP000000763">
    <property type="component" value="Chromosome 1"/>
</dbReference>
<dbReference type="Proteomes" id="UP000059680">
    <property type="component" value="Chromosome 1"/>
</dbReference>
<dbReference type="GO" id="GO:0016020">
    <property type="term" value="C:membrane"/>
    <property type="evidence" value="ECO:0007669"/>
    <property type="project" value="UniProtKB-SubCell"/>
</dbReference>
<dbReference type="GO" id="GO:0140359">
    <property type="term" value="F:ABC-type transporter activity"/>
    <property type="evidence" value="ECO:0007669"/>
    <property type="project" value="InterPro"/>
</dbReference>
<dbReference type="GO" id="GO:0005524">
    <property type="term" value="F:ATP binding"/>
    <property type="evidence" value="ECO:0007669"/>
    <property type="project" value="UniProtKB-KW"/>
</dbReference>
<dbReference type="GO" id="GO:0016887">
    <property type="term" value="F:ATP hydrolysis activity"/>
    <property type="evidence" value="ECO:0007669"/>
    <property type="project" value="InterPro"/>
</dbReference>
<dbReference type="CDD" id="cd03233">
    <property type="entry name" value="ABCG_PDR_domain1"/>
    <property type="match status" value="1"/>
</dbReference>
<dbReference type="CDD" id="cd03232">
    <property type="entry name" value="ABCG_PDR_domain2"/>
    <property type="match status" value="1"/>
</dbReference>
<dbReference type="FunFam" id="3.40.50.300:FF:000179">
    <property type="entry name" value="ABC transporter G family member 34"/>
    <property type="match status" value="1"/>
</dbReference>
<dbReference type="FunFam" id="3.40.50.300:FF:000059">
    <property type="entry name" value="ABC transporter G family member 40"/>
    <property type="match status" value="1"/>
</dbReference>
<dbReference type="Gene3D" id="3.40.50.300">
    <property type="entry name" value="P-loop containing nucleotide triphosphate hydrolases"/>
    <property type="match status" value="2"/>
</dbReference>
<dbReference type="InterPro" id="IPR003593">
    <property type="entry name" value="AAA+_ATPase"/>
</dbReference>
<dbReference type="InterPro" id="IPR013525">
    <property type="entry name" value="ABC2_TM"/>
</dbReference>
<dbReference type="InterPro" id="IPR029481">
    <property type="entry name" value="ABC_trans_N"/>
</dbReference>
<dbReference type="InterPro" id="IPR003439">
    <property type="entry name" value="ABC_transporter-like_ATP-bd"/>
</dbReference>
<dbReference type="InterPro" id="IPR043926">
    <property type="entry name" value="ABCG_dom"/>
</dbReference>
<dbReference type="InterPro" id="IPR034001">
    <property type="entry name" value="ABCG_PDR_1"/>
</dbReference>
<dbReference type="InterPro" id="IPR034003">
    <property type="entry name" value="ABCG_PDR_2"/>
</dbReference>
<dbReference type="InterPro" id="IPR027417">
    <property type="entry name" value="P-loop_NTPase"/>
</dbReference>
<dbReference type="InterPro" id="IPR013581">
    <property type="entry name" value="PDR_assoc"/>
</dbReference>
<dbReference type="PANTHER" id="PTHR48040:SF35">
    <property type="entry name" value="ABC TRANSPORTER G FAMILY MEMBER 39-LIKE"/>
    <property type="match status" value="1"/>
</dbReference>
<dbReference type="PANTHER" id="PTHR48040">
    <property type="entry name" value="PLEIOTROPIC DRUG RESISTANCE PROTEIN 1-LIKE ISOFORM X1"/>
    <property type="match status" value="1"/>
</dbReference>
<dbReference type="Pfam" id="PF01061">
    <property type="entry name" value="ABC2_membrane"/>
    <property type="match status" value="2"/>
</dbReference>
<dbReference type="Pfam" id="PF19055">
    <property type="entry name" value="ABC2_membrane_7"/>
    <property type="match status" value="1"/>
</dbReference>
<dbReference type="Pfam" id="PF00005">
    <property type="entry name" value="ABC_tran"/>
    <property type="match status" value="2"/>
</dbReference>
<dbReference type="Pfam" id="PF14510">
    <property type="entry name" value="ABC_trans_N"/>
    <property type="match status" value="1"/>
</dbReference>
<dbReference type="Pfam" id="PF08370">
    <property type="entry name" value="PDR_assoc"/>
    <property type="match status" value="1"/>
</dbReference>
<dbReference type="SMART" id="SM00382">
    <property type="entry name" value="AAA"/>
    <property type="match status" value="2"/>
</dbReference>
<dbReference type="SUPFAM" id="SSF52540">
    <property type="entry name" value="P-loop containing nucleoside triphosphate hydrolases"/>
    <property type="match status" value="2"/>
</dbReference>
<dbReference type="PROSITE" id="PS50893">
    <property type="entry name" value="ABC_TRANSPORTER_2"/>
    <property type="match status" value="2"/>
</dbReference>
<keyword id="KW-0067">ATP-binding</keyword>
<keyword id="KW-0472">Membrane</keyword>
<keyword id="KW-0547">Nucleotide-binding</keyword>
<keyword id="KW-1185">Reference proteome</keyword>
<keyword id="KW-0677">Repeat</keyword>
<keyword id="KW-0812">Transmembrane</keyword>
<keyword id="KW-1133">Transmembrane helix</keyword>
<keyword id="KW-0813">Transport</keyword>
<accession>Q7PC80</accession>
<accession>A0A0P0V527</accession>
<accession>C7IX53</accession>
<accession>Q8GU91</accession>